<proteinExistence type="inferred from homology"/>
<accession>Q8DC74</accession>
<feature type="chain" id="PRO_0000205024" description="DNA repair protein RecO">
    <location>
        <begin position="1"/>
        <end position="243"/>
    </location>
</feature>
<name>RECO_VIBVU</name>
<reference key="1">
    <citation type="submission" date="2002-12" db="EMBL/GenBank/DDBJ databases">
        <title>Complete genome sequence of Vibrio vulnificus CMCP6.</title>
        <authorList>
            <person name="Rhee J.H."/>
            <person name="Kim S.Y."/>
            <person name="Chung S.S."/>
            <person name="Kim J.J."/>
            <person name="Moon Y.H."/>
            <person name="Jeong H."/>
            <person name="Choy H.E."/>
        </authorList>
    </citation>
    <scope>NUCLEOTIDE SEQUENCE [LARGE SCALE GENOMIC DNA]</scope>
    <source>
        <strain>CMCP6</strain>
    </source>
</reference>
<organism>
    <name type="scientific">Vibrio vulnificus (strain CMCP6)</name>
    <dbReference type="NCBI Taxonomy" id="216895"/>
    <lineage>
        <taxon>Bacteria</taxon>
        <taxon>Pseudomonadati</taxon>
        <taxon>Pseudomonadota</taxon>
        <taxon>Gammaproteobacteria</taxon>
        <taxon>Vibrionales</taxon>
        <taxon>Vibrionaceae</taxon>
        <taxon>Vibrio</taxon>
    </lineage>
</organism>
<dbReference type="EMBL" id="AE016795">
    <property type="protein sequence ID" value="AAO09991.1"/>
    <property type="molecule type" value="Genomic_DNA"/>
</dbReference>
<dbReference type="RefSeq" id="WP_011079502.1">
    <property type="nucleotide sequence ID" value="NC_004459.3"/>
</dbReference>
<dbReference type="SMR" id="Q8DC74"/>
<dbReference type="KEGG" id="vvu:VV1_1567"/>
<dbReference type="HOGENOM" id="CLU_066645_1_0_6"/>
<dbReference type="Proteomes" id="UP000002275">
    <property type="component" value="Chromosome 1"/>
</dbReference>
<dbReference type="GO" id="GO:0043590">
    <property type="term" value="C:bacterial nucleoid"/>
    <property type="evidence" value="ECO:0007669"/>
    <property type="project" value="TreeGrafter"/>
</dbReference>
<dbReference type="GO" id="GO:0006310">
    <property type="term" value="P:DNA recombination"/>
    <property type="evidence" value="ECO:0007669"/>
    <property type="project" value="UniProtKB-UniRule"/>
</dbReference>
<dbReference type="GO" id="GO:0006302">
    <property type="term" value="P:double-strand break repair"/>
    <property type="evidence" value="ECO:0007669"/>
    <property type="project" value="TreeGrafter"/>
</dbReference>
<dbReference type="Gene3D" id="2.40.50.140">
    <property type="entry name" value="Nucleic acid-binding proteins"/>
    <property type="match status" value="1"/>
</dbReference>
<dbReference type="Gene3D" id="1.20.1440.120">
    <property type="entry name" value="Recombination protein O, C-terminal domain"/>
    <property type="match status" value="1"/>
</dbReference>
<dbReference type="HAMAP" id="MF_00201">
    <property type="entry name" value="RecO"/>
    <property type="match status" value="1"/>
</dbReference>
<dbReference type="InterPro" id="IPR037278">
    <property type="entry name" value="ARFGAP/RecO"/>
</dbReference>
<dbReference type="InterPro" id="IPR022572">
    <property type="entry name" value="DNA_rep/recomb_RecO_N"/>
</dbReference>
<dbReference type="InterPro" id="IPR012340">
    <property type="entry name" value="NA-bd_OB-fold"/>
</dbReference>
<dbReference type="InterPro" id="IPR003717">
    <property type="entry name" value="RecO"/>
</dbReference>
<dbReference type="InterPro" id="IPR042242">
    <property type="entry name" value="RecO_C"/>
</dbReference>
<dbReference type="NCBIfam" id="TIGR00613">
    <property type="entry name" value="reco"/>
    <property type="match status" value="1"/>
</dbReference>
<dbReference type="PANTHER" id="PTHR33991">
    <property type="entry name" value="DNA REPAIR PROTEIN RECO"/>
    <property type="match status" value="1"/>
</dbReference>
<dbReference type="PANTHER" id="PTHR33991:SF1">
    <property type="entry name" value="DNA REPAIR PROTEIN RECO"/>
    <property type="match status" value="1"/>
</dbReference>
<dbReference type="Pfam" id="PF02565">
    <property type="entry name" value="RecO_C"/>
    <property type="match status" value="1"/>
</dbReference>
<dbReference type="Pfam" id="PF11967">
    <property type="entry name" value="RecO_N"/>
    <property type="match status" value="1"/>
</dbReference>
<dbReference type="SUPFAM" id="SSF57863">
    <property type="entry name" value="ArfGap/RecO-like zinc finger"/>
    <property type="match status" value="1"/>
</dbReference>
<dbReference type="SUPFAM" id="SSF50249">
    <property type="entry name" value="Nucleic acid-binding proteins"/>
    <property type="match status" value="1"/>
</dbReference>
<gene>
    <name evidence="1" type="primary">recO</name>
    <name type="ordered locus">VV1_1567</name>
</gene>
<evidence type="ECO:0000255" key="1">
    <source>
        <dbReference type="HAMAP-Rule" id="MF_00201"/>
    </source>
</evidence>
<sequence length="243" mass="27570">MNAPDGLQRCFVLHRRPYSESSLILDIFSEEFGRITLMSKGARSKRSNLKGALQPFTPLLLKWSGKGAMKTLRQAEPISLGLPLTGINLYSALYVNELIGRVLMQEVSMPGLFHDYLFALTELAQADNPEPALRRFELALLAAMGYGVDFLHCAGTGEPIDPQMTYRYREQKGFIASVRRDNLTFLGNELIAISERRFLTKEQLQAAKRFTRIALKPYLGGKPLKSRELFIQMRIPRTRSMEK</sequence>
<comment type="function">
    <text evidence="1">Involved in DNA repair and RecF pathway recombination.</text>
</comment>
<comment type="similarity">
    <text evidence="1">Belongs to the RecO family.</text>
</comment>
<keyword id="KW-0227">DNA damage</keyword>
<keyword id="KW-0233">DNA recombination</keyword>
<keyword id="KW-0234">DNA repair</keyword>
<protein>
    <recommendedName>
        <fullName evidence="1">DNA repair protein RecO</fullName>
    </recommendedName>
    <alternativeName>
        <fullName evidence="1">Recombination protein O</fullName>
    </alternativeName>
</protein>